<name>RL34_CHLL3</name>
<reference key="1">
    <citation type="submission" date="2005-08" db="EMBL/GenBank/DDBJ databases">
        <title>Complete sequence of Pelodictyon luteolum DSM 273.</title>
        <authorList>
            <consortium name="US DOE Joint Genome Institute"/>
            <person name="Copeland A."/>
            <person name="Lucas S."/>
            <person name="Lapidus A."/>
            <person name="Barry K."/>
            <person name="Detter J.C."/>
            <person name="Glavina T."/>
            <person name="Hammon N."/>
            <person name="Israni S."/>
            <person name="Pitluck S."/>
            <person name="Bryant D."/>
            <person name="Schmutz J."/>
            <person name="Larimer F."/>
            <person name="Land M."/>
            <person name="Kyrpides N."/>
            <person name="Ivanova N."/>
            <person name="Richardson P."/>
        </authorList>
    </citation>
    <scope>NUCLEOTIDE SEQUENCE [LARGE SCALE GENOMIC DNA]</scope>
    <source>
        <strain>DSM 273 / BCRC 81028 / 2530</strain>
    </source>
</reference>
<evidence type="ECO:0000255" key="1">
    <source>
        <dbReference type="HAMAP-Rule" id="MF_00391"/>
    </source>
</evidence>
<evidence type="ECO:0000256" key="2">
    <source>
        <dbReference type="SAM" id="MobiDB-lite"/>
    </source>
</evidence>
<evidence type="ECO:0000305" key="3"/>
<accession>Q3B107</accession>
<proteinExistence type="inferred from homology"/>
<gene>
    <name evidence="1" type="primary">rpmH</name>
    <name type="ordered locus">Plut_2132</name>
</gene>
<feature type="chain" id="PRO_1000013394" description="Large ribosomal subunit protein bL34">
    <location>
        <begin position="1"/>
        <end position="53"/>
    </location>
</feature>
<feature type="region of interest" description="Disordered" evidence="2">
    <location>
        <begin position="1"/>
        <end position="53"/>
    </location>
</feature>
<feature type="compositionally biased region" description="Basic residues" evidence="2">
    <location>
        <begin position="1"/>
        <end position="19"/>
    </location>
</feature>
<feature type="compositionally biased region" description="Basic residues" evidence="2">
    <location>
        <begin position="26"/>
        <end position="40"/>
    </location>
</feature>
<feature type="compositionally biased region" description="Polar residues" evidence="2">
    <location>
        <begin position="42"/>
        <end position="53"/>
    </location>
</feature>
<comment type="similarity">
    <text evidence="1">Belongs to the bacterial ribosomal protein bL34 family.</text>
</comment>
<keyword id="KW-1185">Reference proteome</keyword>
<keyword id="KW-0687">Ribonucleoprotein</keyword>
<keyword id="KW-0689">Ribosomal protein</keyword>
<dbReference type="EMBL" id="CP000096">
    <property type="protein sequence ID" value="ABB24974.1"/>
    <property type="molecule type" value="Genomic_DNA"/>
</dbReference>
<dbReference type="RefSeq" id="WP_011358844.1">
    <property type="nucleotide sequence ID" value="NC_007512.1"/>
</dbReference>
<dbReference type="SMR" id="Q3B107"/>
<dbReference type="STRING" id="319225.Plut_2132"/>
<dbReference type="KEGG" id="plt:Plut_2132"/>
<dbReference type="eggNOG" id="COG0230">
    <property type="taxonomic scope" value="Bacteria"/>
</dbReference>
<dbReference type="HOGENOM" id="CLU_129938_2_0_10"/>
<dbReference type="OrthoDB" id="9804164at2"/>
<dbReference type="Proteomes" id="UP000002709">
    <property type="component" value="Chromosome"/>
</dbReference>
<dbReference type="GO" id="GO:1990904">
    <property type="term" value="C:ribonucleoprotein complex"/>
    <property type="evidence" value="ECO:0007669"/>
    <property type="project" value="UniProtKB-KW"/>
</dbReference>
<dbReference type="GO" id="GO:0005840">
    <property type="term" value="C:ribosome"/>
    <property type="evidence" value="ECO:0007669"/>
    <property type="project" value="UniProtKB-KW"/>
</dbReference>
<dbReference type="GO" id="GO:0003735">
    <property type="term" value="F:structural constituent of ribosome"/>
    <property type="evidence" value="ECO:0007669"/>
    <property type="project" value="InterPro"/>
</dbReference>
<dbReference type="GO" id="GO:0006412">
    <property type="term" value="P:translation"/>
    <property type="evidence" value="ECO:0007669"/>
    <property type="project" value="UniProtKB-UniRule"/>
</dbReference>
<dbReference type="FunFam" id="1.10.287.3980:FF:000001">
    <property type="entry name" value="Mitochondrial ribosomal protein L34"/>
    <property type="match status" value="1"/>
</dbReference>
<dbReference type="Gene3D" id="1.10.287.3980">
    <property type="match status" value="1"/>
</dbReference>
<dbReference type="HAMAP" id="MF_00391">
    <property type="entry name" value="Ribosomal_bL34"/>
    <property type="match status" value="1"/>
</dbReference>
<dbReference type="InterPro" id="IPR000271">
    <property type="entry name" value="Ribosomal_bL34"/>
</dbReference>
<dbReference type="InterPro" id="IPR020939">
    <property type="entry name" value="Ribosomal_bL34_CS"/>
</dbReference>
<dbReference type="NCBIfam" id="TIGR01030">
    <property type="entry name" value="rpmH_bact"/>
    <property type="match status" value="1"/>
</dbReference>
<dbReference type="PANTHER" id="PTHR14503:SF4">
    <property type="entry name" value="LARGE RIBOSOMAL SUBUNIT PROTEIN BL34M"/>
    <property type="match status" value="1"/>
</dbReference>
<dbReference type="PANTHER" id="PTHR14503">
    <property type="entry name" value="MITOCHONDRIAL RIBOSOMAL PROTEIN 34 FAMILY MEMBER"/>
    <property type="match status" value="1"/>
</dbReference>
<dbReference type="Pfam" id="PF00468">
    <property type="entry name" value="Ribosomal_L34"/>
    <property type="match status" value="1"/>
</dbReference>
<dbReference type="PROSITE" id="PS00784">
    <property type="entry name" value="RIBOSOMAL_L34"/>
    <property type="match status" value="1"/>
</dbReference>
<organism>
    <name type="scientific">Chlorobium luteolum (strain DSM 273 / BCRC 81028 / 2530)</name>
    <name type="common">Pelodictyon luteolum</name>
    <dbReference type="NCBI Taxonomy" id="319225"/>
    <lineage>
        <taxon>Bacteria</taxon>
        <taxon>Pseudomonadati</taxon>
        <taxon>Chlorobiota</taxon>
        <taxon>Chlorobiia</taxon>
        <taxon>Chlorobiales</taxon>
        <taxon>Chlorobiaceae</taxon>
        <taxon>Chlorobium/Pelodictyon group</taxon>
        <taxon>Pelodictyon</taxon>
    </lineage>
</organism>
<sequence>MKRTFQPSNRKRRNKHGFRLRMSTKNGRKILSARRAKGRHSLSVSSEMGTAGK</sequence>
<protein>
    <recommendedName>
        <fullName evidence="1">Large ribosomal subunit protein bL34</fullName>
    </recommendedName>
    <alternativeName>
        <fullName evidence="3">50S ribosomal protein L34</fullName>
    </alternativeName>
</protein>